<keyword id="KW-0002">3D-structure</keyword>
<keyword id="KW-0143">Chaperone</keyword>
<keyword id="KW-0963">Cytoplasm</keyword>
<keyword id="KW-0903">Direct protein sequencing</keyword>
<keyword id="KW-0539">Nucleus</keyword>
<keyword id="KW-0597">Phosphoprotein</keyword>
<keyword id="KW-1267">Proteomics identification</keyword>
<keyword id="KW-1185">Reference proteome</keyword>
<keyword id="KW-0964">Secreted</keyword>
<keyword id="KW-0346">Stress response</keyword>
<protein>
    <recommendedName>
        <fullName>Heat shock protein beta-6</fullName>
        <shortName>HspB6</shortName>
    </recommendedName>
    <alternativeName>
        <fullName>Heat shock 20 kDa-like protein p20</fullName>
    </alternativeName>
    <alternativeName>
        <fullName>Heat shock protein family B member 6</fullName>
    </alternativeName>
</protein>
<sequence>MEIPVPVQPSWLRRASAPLPGLSAPGRLFDQRFGEGLLEAELAALCPTTLAPYYLRAPSVALPVAQVPTDPGHFSVLLDVKHFSPEEIAVKVVGEHVEVHARHEERPDEHGFVAREFHRRYRLPPGVDPAAVTSALSPEGVLSIQAAPASAQAPPPAAAK</sequence>
<gene>
    <name type="primary">HSPB6</name>
</gene>
<accession>O14558</accession>
<accession>O14551</accession>
<accession>Q6NVI3</accession>
<accession>Q96MG9</accession>
<comment type="function">
    <text evidence="4 7 8 12 19 20">Small heat shock protein which functions as a molecular chaperone probably maintaining denatured proteins in a folding-competent state. Seems to have versatile functions in various biological processes. Plays a role in regulating muscle function such as smooth muscle vasorelaxation and cardiac myocyte contractility. May regulate myocardial angiogenesis implicating KDR. Overexpression mediates cardioprotection and angiogenesis after induced damage. Stabilizes monomeric YWHAZ thereby supporting YWHAZ chaperone-like activity.</text>
</comment>
<comment type="subunit">
    <text evidence="7 9 10 11 12 13 14 15 16 17">Homodimer. Small heat shock proteins form high molecular mass oligomers containing variable number of monomers; these oligomers display a very flexible quaternary structure easily exchanging their subunits. Heterooligomer with HSPB1; formed through oligomerization of HSPB1:HSBP6 dimers; subunit exchange leads to formation of at least two different heterooligomeric complexes, differing in variable quantities of HSPB1 and HSPB6 homodimers in addition to HSPB1:HSPB6 heterodimers. Heterooligomer with CRYAB; large heterooligomers consist of CRYAB homodimers and HSPB5:HSPB6 heterodimers but lacking HSPB6 homodimers. Interacts with BAG3. Interacts (phosphorylated) with YWHAZ. Interacts with PDE4A and PDE4D; required for maintenance of the non-phosphorylated state of HSPB6 under basal conditions. Interacts with KDR. Interacts with PRKD1.</text>
</comment>
<comment type="subcellular location">
    <subcellularLocation>
        <location evidence="6">Cytoplasm</location>
    </subcellularLocation>
    <subcellularLocation>
        <location evidence="6">Nucleus</location>
    </subcellularLocation>
    <subcellularLocation>
        <location evidence="12">Secreted</location>
    </subcellularLocation>
    <text evidence="6">Translocates to nuclear foci during heat shock.</text>
</comment>
<comment type="PTM">
    <text evidence="18">The N-terminus is blocked.</text>
</comment>
<comment type="PTM">
    <text evidence="1 2 21">Phosphorylated at Ser-16 by PKA and probably PKD1K; required to protect cardiomyocytes from apoptosis.</text>
</comment>
<comment type="similarity">
    <text evidence="3">Belongs to the small heat shock protein (HSP20) family.</text>
</comment>
<dbReference type="EMBL" id="AK056951">
    <property type="protein sequence ID" value="BAB71323.1"/>
    <property type="molecule type" value="mRNA"/>
</dbReference>
<dbReference type="EMBL" id="AC002398">
    <property type="protein sequence ID" value="AAB81196.1"/>
    <property type="molecule type" value="Genomic_DNA"/>
</dbReference>
<dbReference type="EMBL" id="BC068046">
    <property type="protein sequence ID" value="AAH68046.1"/>
    <property type="molecule type" value="mRNA"/>
</dbReference>
<dbReference type="CCDS" id="CCDS12475.1"/>
<dbReference type="PIR" id="B53814">
    <property type="entry name" value="B53814"/>
</dbReference>
<dbReference type="PIR" id="T00703">
    <property type="entry name" value="T00703"/>
</dbReference>
<dbReference type="RefSeq" id="NP_653218.1">
    <property type="nucleotide sequence ID" value="NM_144617.3"/>
</dbReference>
<dbReference type="PDB" id="4JUS">
    <property type="method" value="X-ray"/>
    <property type="resolution" value="2.50 A"/>
    <property type="chains" value="A/B/C/D/E/F/G/H=57-160"/>
</dbReference>
<dbReference type="PDB" id="4JUT">
    <property type="method" value="X-ray"/>
    <property type="resolution" value="2.20 A"/>
    <property type="chains" value="A/B/C/D/E/F/G/H=57-160"/>
</dbReference>
<dbReference type="PDB" id="5LTW">
    <property type="method" value="X-ray"/>
    <property type="resolution" value="4.50 A"/>
    <property type="chains" value="C/D/G/H/K/L=1-149"/>
</dbReference>
<dbReference type="PDB" id="5LU1">
    <property type="method" value="X-ray"/>
    <property type="resolution" value="2.40 A"/>
    <property type="chains" value="C/D/G/H=13-20"/>
</dbReference>
<dbReference type="PDB" id="5LU2">
    <property type="method" value="X-ray"/>
    <property type="resolution" value="2.50 A"/>
    <property type="chains" value="C/D=11-23"/>
</dbReference>
<dbReference type="PDB" id="5LUM">
    <property type="method" value="X-ray"/>
    <property type="resolution" value="2.60 A"/>
    <property type="chains" value="A/B/C/D/E=72-149, F/G/H/I/J=2-10"/>
</dbReference>
<dbReference type="PDB" id="5OK9">
    <property type="method" value="X-ray"/>
    <property type="resolution" value="2.35 A"/>
    <property type="chains" value="A/B/E/F=12-19"/>
</dbReference>
<dbReference type="PDB" id="5OKF">
    <property type="method" value="X-ray"/>
    <property type="resolution" value="3.20 A"/>
    <property type="chains" value="A/B/C/D=12-19"/>
</dbReference>
<dbReference type="PDBsum" id="4JUS"/>
<dbReference type="PDBsum" id="4JUT"/>
<dbReference type="PDBsum" id="5LTW"/>
<dbReference type="PDBsum" id="5LU1"/>
<dbReference type="PDBsum" id="5LU2"/>
<dbReference type="PDBsum" id="5LUM"/>
<dbReference type="PDBsum" id="5OK9"/>
<dbReference type="PDBsum" id="5OKF"/>
<dbReference type="SMR" id="O14558"/>
<dbReference type="BioGRID" id="125988">
    <property type="interactions" value="17"/>
</dbReference>
<dbReference type="CORUM" id="O14558"/>
<dbReference type="FunCoup" id="O14558">
    <property type="interactions" value="360"/>
</dbReference>
<dbReference type="IntAct" id="O14558">
    <property type="interactions" value="12"/>
</dbReference>
<dbReference type="MINT" id="O14558"/>
<dbReference type="STRING" id="9606.ENSP00000004982"/>
<dbReference type="GlyGen" id="O14558">
    <property type="glycosylation" value="1 site, 1 O-linked glycan (1 site)"/>
</dbReference>
<dbReference type="iPTMnet" id="O14558"/>
<dbReference type="PhosphoSitePlus" id="O14558"/>
<dbReference type="BioMuta" id="HSPB6"/>
<dbReference type="REPRODUCTION-2DPAGE" id="O14558"/>
<dbReference type="jPOST" id="O14558"/>
<dbReference type="MassIVE" id="O14558"/>
<dbReference type="PaxDb" id="9606-ENSP00000468057"/>
<dbReference type="PeptideAtlas" id="O14558"/>
<dbReference type="ProteomicsDB" id="48083"/>
<dbReference type="Antibodypedia" id="4537">
    <property type="antibodies" value="369 antibodies from 37 providers"/>
</dbReference>
<dbReference type="DNASU" id="126393"/>
<dbReference type="Ensembl" id="ENST00000004982.6">
    <property type="protein sequence ID" value="ENSP00000004982.3"/>
    <property type="gene ID" value="ENSG00000004776.13"/>
</dbReference>
<dbReference type="GeneID" id="126393"/>
<dbReference type="KEGG" id="hsa:126393"/>
<dbReference type="MANE-Select" id="ENST00000004982.6">
    <property type="protein sequence ID" value="ENSP00000004982.3"/>
    <property type="RefSeq nucleotide sequence ID" value="NM_144617.3"/>
    <property type="RefSeq protein sequence ID" value="NP_653218.1"/>
</dbReference>
<dbReference type="AGR" id="HGNC:26511"/>
<dbReference type="CTD" id="126393"/>
<dbReference type="DisGeNET" id="126393"/>
<dbReference type="GeneCards" id="HSPB6"/>
<dbReference type="HGNC" id="HGNC:26511">
    <property type="gene designation" value="HSPB6"/>
</dbReference>
<dbReference type="HPA" id="ENSG00000004776">
    <property type="expression patterns" value="Tissue enhanced (skeletal muscle, tongue)"/>
</dbReference>
<dbReference type="MIM" id="610695">
    <property type="type" value="gene"/>
</dbReference>
<dbReference type="neXtProt" id="NX_O14558"/>
<dbReference type="OpenTargets" id="ENSG00000004776"/>
<dbReference type="PharmGKB" id="PA134983584"/>
<dbReference type="VEuPathDB" id="HostDB:ENSG00000004776"/>
<dbReference type="eggNOG" id="KOG3591">
    <property type="taxonomic scope" value="Eukaryota"/>
</dbReference>
<dbReference type="GeneTree" id="ENSGT00940000161100"/>
<dbReference type="HOGENOM" id="CLU_095001_2_0_1"/>
<dbReference type="InParanoid" id="O14558"/>
<dbReference type="OMA" id="TIHHPWM"/>
<dbReference type="OrthoDB" id="1431247at2759"/>
<dbReference type="PAN-GO" id="O14558">
    <property type="GO annotations" value="6 GO annotations based on evolutionary models"/>
</dbReference>
<dbReference type="PhylomeDB" id="O14558"/>
<dbReference type="PathwayCommons" id="O14558"/>
<dbReference type="SignaLink" id="O14558"/>
<dbReference type="SIGNOR" id="O14558"/>
<dbReference type="BioGRID-ORCS" id="126393">
    <property type="hits" value="12 hits in 1148 CRISPR screens"/>
</dbReference>
<dbReference type="ChiTaRS" id="HSPB6">
    <property type="organism name" value="human"/>
</dbReference>
<dbReference type="EvolutionaryTrace" id="O14558"/>
<dbReference type="GeneWiki" id="HSPB6"/>
<dbReference type="GenomeRNAi" id="126393"/>
<dbReference type="Pharos" id="O14558">
    <property type="development level" value="Tbio"/>
</dbReference>
<dbReference type="PRO" id="PR:O14558"/>
<dbReference type="Proteomes" id="UP000005640">
    <property type="component" value="Chromosome 19"/>
</dbReference>
<dbReference type="RNAct" id="O14558">
    <property type="molecule type" value="protein"/>
</dbReference>
<dbReference type="Bgee" id="ENSG00000004776">
    <property type="expression patterns" value="Expressed in hindlimb stylopod muscle and 151 other cell types or tissues"/>
</dbReference>
<dbReference type="ExpressionAtlas" id="O14558">
    <property type="expression patterns" value="baseline and differential"/>
</dbReference>
<dbReference type="GO" id="GO:0005737">
    <property type="term" value="C:cytoplasm"/>
    <property type="evidence" value="ECO:0000314"/>
    <property type="project" value="UniProtKB"/>
</dbReference>
<dbReference type="GO" id="GO:0005829">
    <property type="term" value="C:cytosol"/>
    <property type="evidence" value="ECO:0000314"/>
    <property type="project" value="HPA"/>
</dbReference>
<dbReference type="GO" id="GO:0005576">
    <property type="term" value="C:extracellular region"/>
    <property type="evidence" value="ECO:0000314"/>
    <property type="project" value="UniProtKB"/>
</dbReference>
<dbReference type="GO" id="GO:0005739">
    <property type="term" value="C:mitochondrion"/>
    <property type="evidence" value="ECO:0000314"/>
    <property type="project" value="HPA"/>
</dbReference>
<dbReference type="GO" id="GO:0016607">
    <property type="term" value="C:nuclear speck"/>
    <property type="evidence" value="ECO:0000314"/>
    <property type="project" value="HPA"/>
</dbReference>
<dbReference type="GO" id="GO:0005634">
    <property type="term" value="C:nucleus"/>
    <property type="evidence" value="ECO:0000314"/>
    <property type="project" value="UniProtKB"/>
</dbReference>
<dbReference type="GO" id="GO:0044183">
    <property type="term" value="F:protein folding chaperone"/>
    <property type="evidence" value="ECO:0000314"/>
    <property type="project" value="DisProt"/>
</dbReference>
<dbReference type="GO" id="GO:0042803">
    <property type="term" value="F:protein homodimerization activity"/>
    <property type="evidence" value="ECO:0000250"/>
    <property type="project" value="UniProtKB"/>
</dbReference>
<dbReference type="GO" id="GO:0019901">
    <property type="term" value="F:protein kinase binding"/>
    <property type="evidence" value="ECO:0007669"/>
    <property type="project" value="Ensembl"/>
</dbReference>
<dbReference type="GO" id="GO:0051087">
    <property type="term" value="F:protein-folding chaperone binding"/>
    <property type="evidence" value="ECO:0000353"/>
    <property type="project" value="UniProtKB"/>
</dbReference>
<dbReference type="GO" id="GO:0005212">
    <property type="term" value="F:structural constituent of eye lens"/>
    <property type="evidence" value="ECO:0007669"/>
    <property type="project" value="InterPro"/>
</dbReference>
<dbReference type="GO" id="GO:0051082">
    <property type="term" value="F:unfolded protein binding"/>
    <property type="evidence" value="ECO:0000314"/>
    <property type="project" value="UniProtKB"/>
</dbReference>
<dbReference type="GO" id="GO:0061077">
    <property type="term" value="P:chaperone-mediated protein folding"/>
    <property type="evidence" value="ECO:0000314"/>
    <property type="project" value="UniProtKB"/>
</dbReference>
<dbReference type="GO" id="GO:0043066">
    <property type="term" value="P:negative regulation of apoptotic process"/>
    <property type="evidence" value="ECO:0000318"/>
    <property type="project" value="GO_Central"/>
</dbReference>
<dbReference type="GO" id="GO:0010667">
    <property type="term" value="P:negative regulation of cardiac muscle cell apoptotic process"/>
    <property type="evidence" value="ECO:0007669"/>
    <property type="project" value="Ensembl"/>
</dbReference>
<dbReference type="GO" id="GO:0045766">
    <property type="term" value="P:positive regulation of angiogenesis"/>
    <property type="evidence" value="ECO:0000314"/>
    <property type="project" value="UniProtKB"/>
</dbReference>
<dbReference type="GO" id="GO:0042026">
    <property type="term" value="P:protein refolding"/>
    <property type="evidence" value="ECO:0000318"/>
    <property type="project" value="GO_Central"/>
</dbReference>
<dbReference type="GO" id="GO:0009408">
    <property type="term" value="P:response to heat"/>
    <property type="evidence" value="ECO:0000318"/>
    <property type="project" value="GO_Central"/>
</dbReference>
<dbReference type="CDD" id="cd06478">
    <property type="entry name" value="ACD_HspB4-5-6"/>
    <property type="match status" value="1"/>
</dbReference>
<dbReference type="DisProt" id="DP01131"/>
<dbReference type="FunFam" id="2.60.40.790:FF:000029">
    <property type="entry name" value="Putative heat shock protein beta-6"/>
    <property type="match status" value="1"/>
</dbReference>
<dbReference type="Gene3D" id="2.60.40.790">
    <property type="match status" value="1"/>
</dbReference>
<dbReference type="InterPro" id="IPR002068">
    <property type="entry name" value="A-crystallin/Hsp20_dom"/>
</dbReference>
<dbReference type="InterPro" id="IPR001436">
    <property type="entry name" value="Alpha-crystallin/sHSP_animal"/>
</dbReference>
<dbReference type="InterPro" id="IPR003090">
    <property type="entry name" value="Alpha-crystallin_N"/>
</dbReference>
<dbReference type="InterPro" id="IPR008978">
    <property type="entry name" value="HSP20-like_chaperone"/>
</dbReference>
<dbReference type="PANTHER" id="PTHR45640:SF36">
    <property type="entry name" value="HEAT SHOCK PROTEIN BETA-6"/>
    <property type="match status" value="1"/>
</dbReference>
<dbReference type="PANTHER" id="PTHR45640">
    <property type="entry name" value="HEAT SHOCK PROTEIN HSP-12.2-RELATED"/>
    <property type="match status" value="1"/>
</dbReference>
<dbReference type="Pfam" id="PF00525">
    <property type="entry name" value="Crystallin"/>
    <property type="match status" value="1"/>
</dbReference>
<dbReference type="Pfam" id="PF00011">
    <property type="entry name" value="HSP20"/>
    <property type="match status" value="1"/>
</dbReference>
<dbReference type="PRINTS" id="PR00299">
    <property type="entry name" value="ACRYSTALLIN"/>
</dbReference>
<dbReference type="SUPFAM" id="SSF49764">
    <property type="entry name" value="HSP20-like chaperones"/>
    <property type="match status" value="1"/>
</dbReference>
<dbReference type="PROSITE" id="PS01031">
    <property type="entry name" value="SHSP"/>
    <property type="match status" value="1"/>
</dbReference>
<reference key="1">
    <citation type="journal article" date="2004" name="Nat. Genet.">
        <title>Complete sequencing and characterization of 21,243 full-length human cDNAs.</title>
        <authorList>
            <person name="Ota T."/>
            <person name="Suzuki Y."/>
            <person name="Nishikawa T."/>
            <person name="Otsuki T."/>
            <person name="Sugiyama T."/>
            <person name="Irie R."/>
            <person name="Wakamatsu A."/>
            <person name="Hayashi K."/>
            <person name="Sato H."/>
            <person name="Nagai K."/>
            <person name="Kimura K."/>
            <person name="Makita H."/>
            <person name="Sekine M."/>
            <person name="Obayashi M."/>
            <person name="Nishi T."/>
            <person name="Shibahara T."/>
            <person name="Tanaka T."/>
            <person name="Ishii S."/>
            <person name="Yamamoto J."/>
            <person name="Saito K."/>
            <person name="Kawai Y."/>
            <person name="Isono Y."/>
            <person name="Nakamura Y."/>
            <person name="Nagahari K."/>
            <person name="Murakami K."/>
            <person name="Yasuda T."/>
            <person name="Iwayanagi T."/>
            <person name="Wagatsuma M."/>
            <person name="Shiratori A."/>
            <person name="Sudo H."/>
            <person name="Hosoiri T."/>
            <person name="Kaku Y."/>
            <person name="Kodaira H."/>
            <person name="Kondo H."/>
            <person name="Sugawara M."/>
            <person name="Takahashi M."/>
            <person name="Kanda K."/>
            <person name="Yokoi T."/>
            <person name="Furuya T."/>
            <person name="Kikkawa E."/>
            <person name="Omura Y."/>
            <person name="Abe K."/>
            <person name="Kamihara K."/>
            <person name="Katsuta N."/>
            <person name="Sato K."/>
            <person name="Tanikawa M."/>
            <person name="Yamazaki M."/>
            <person name="Ninomiya K."/>
            <person name="Ishibashi T."/>
            <person name="Yamashita H."/>
            <person name="Murakawa K."/>
            <person name="Fujimori K."/>
            <person name="Tanai H."/>
            <person name="Kimata M."/>
            <person name="Watanabe M."/>
            <person name="Hiraoka S."/>
            <person name="Chiba Y."/>
            <person name="Ishida S."/>
            <person name="Ono Y."/>
            <person name="Takiguchi S."/>
            <person name="Watanabe S."/>
            <person name="Yosida M."/>
            <person name="Hotuta T."/>
            <person name="Kusano J."/>
            <person name="Kanehori K."/>
            <person name="Takahashi-Fujii A."/>
            <person name="Hara H."/>
            <person name="Tanase T.-O."/>
            <person name="Nomura Y."/>
            <person name="Togiya S."/>
            <person name="Komai F."/>
            <person name="Hara R."/>
            <person name="Takeuchi K."/>
            <person name="Arita M."/>
            <person name="Imose N."/>
            <person name="Musashino K."/>
            <person name="Yuuki H."/>
            <person name="Oshima A."/>
            <person name="Sasaki N."/>
            <person name="Aotsuka S."/>
            <person name="Yoshikawa Y."/>
            <person name="Matsunawa H."/>
            <person name="Ichihara T."/>
            <person name="Shiohata N."/>
            <person name="Sano S."/>
            <person name="Moriya S."/>
            <person name="Momiyama H."/>
            <person name="Satoh N."/>
            <person name="Takami S."/>
            <person name="Terashima Y."/>
            <person name="Suzuki O."/>
            <person name="Nakagawa S."/>
            <person name="Senoh A."/>
            <person name="Mizoguchi H."/>
            <person name="Goto Y."/>
            <person name="Shimizu F."/>
            <person name="Wakebe H."/>
            <person name="Hishigaki H."/>
            <person name="Watanabe T."/>
            <person name="Sugiyama A."/>
            <person name="Takemoto M."/>
            <person name="Kawakami B."/>
            <person name="Yamazaki M."/>
            <person name="Watanabe K."/>
            <person name="Kumagai A."/>
            <person name="Itakura S."/>
            <person name="Fukuzumi Y."/>
            <person name="Fujimori Y."/>
            <person name="Komiyama M."/>
            <person name="Tashiro H."/>
            <person name="Tanigami A."/>
            <person name="Fujiwara T."/>
            <person name="Ono T."/>
            <person name="Yamada K."/>
            <person name="Fujii Y."/>
            <person name="Ozaki K."/>
            <person name="Hirao M."/>
            <person name="Ohmori Y."/>
            <person name="Kawabata A."/>
            <person name="Hikiji T."/>
            <person name="Kobatake N."/>
            <person name="Inagaki H."/>
            <person name="Ikema Y."/>
            <person name="Okamoto S."/>
            <person name="Okitani R."/>
            <person name="Kawakami T."/>
            <person name="Noguchi S."/>
            <person name="Itoh T."/>
            <person name="Shigeta K."/>
            <person name="Senba T."/>
            <person name="Matsumura K."/>
            <person name="Nakajima Y."/>
            <person name="Mizuno T."/>
            <person name="Morinaga M."/>
            <person name="Sasaki M."/>
            <person name="Togashi T."/>
            <person name="Oyama M."/>
            <person name="Hata H."/>
            <person name="Watanabe M."/>
            <person name="Komatsu T."/>
            <person name="Mizushima-Sugano J."/>
            <person name="Satoh T."/>
            <person name="Shirai Y."/>
            <person name="Takahashi Y."/>
            <person name="Nakagawa K."/>
            <person name="Okumura K."/>
            <person name="Nagase T."/>
            <person name="Nomura N."/>
            <person name="Kikuchi H."/>
            <person name="Masuho Y."/>
            <person name="Yamashita R."/>
            <person name="Nakai K."/>
            <person name="Yada T."/>
            <person name="Nakamura Y."/>
            <person name="Ohara O."/>
            <person name="Isogai T."/>
            <person name="Sugano S."/>
        </authorList>
    </citation>
    <scope>NUCLEOTIDE SEQUENCE [LARGE SCALE MRNA]</scope>
    <source>
        <tissue>Skeletal muscle</tissue>
    </source>
</reference>
<reference key="2">
    <citation type="journal article" date="2004" name="Nature">
        <title>The DNA sequence and biology of human chromosome 19.</title>
        <authorList>
            <person name="Grimwood J."/>
            <person name="Gordon L.A."/>
            <person name="Olsen A.S."/>
            <person name="Terry A."/>
            <person name="Schmutz J."/>
            <person name="Lamerdin J.E."/>
            <person name="Hellsten U."/>
            <person name="Goodstein D."/>
            <person name="Couronne O."/>
            <person name="Tran-Gyamfi M."/>
            <person name="Aerts A."/>
            <person name="Altherr M."/>
            <person name="Ashworth L."/>
            <person name="Bajorek E."/>
            <person name="Black S."/>
            <person name="Branscomb E."/>
            <person name="Caenepeel S."/>
            <person name="Carrano A.V."/>
            <person name="Caoile C."/>
            <person name="Chan Y.M."/>
            <person name="Christensen M."/>
            <person name="Cleland C.A."/>
            <person name="Copeland A."/>
            <person name="Dalin E."/>
            <person name="Dehal P."/>
            <person name="Denys M."/>
            <person name="Detter J.C."/>
            <person name="Escobar J."/>
            <person name="Flowers D."/>
            <person name="Fotopulos D."/>
            <person name="Garcia C."/>
            <person name="Georgescu A.M."/>
            <person name="Glavina T."/>
            <person name="Gomez M."/>
            <person name="Gonzales E."/>
            <person name="Groza M."/>
            <person name="Hammon N."/>
            <person name="Hawkins T."/>
            <person name="Haydu L."/>
            <person name="Ho I."/>
            <person name="Huang W."/>
            <person name="Israni S."/>
            <person name="Jett J."/>
            <person name="Kadner K."/>
            <person name="Kimball H."/>
            <person name="Kobayashi A."/>
            <person name="Larionov V."/>
            <person name="Leem S.-H."/>
            <person name="Lopez F."/>
            <person name="Lou Y."/>
            <person name="Lowry S."/>
            <person name="Malfatti S."/>
            <person name="Martinez D."/>
            <person name="McCready P.M."/>
            <person name="Medina C."/>
            <person name="Morgan J."/>
            <person name="Nelson K."/>
            <person name="Nolan M."/>
            <person name="Ovcharenko I."/>
            <person name="Pitluck S."/>
            <person name="Pollard M."/>
            <person name="Popkie A.P."/>
            <person name="Predki P."/>
            <person name="Quan G."/>
            <person name="Ramirez L."/>
            <person name="Rash S."/>
            <person name="Retterer J."/>
            <person name="Rodriguez A."/>
            <person name="Rogers S."/>
            <person name="Salamov A."/>
            <person name="Salazar A."/>
            <person name="She X."/>
            <person name="Smith D."/>
            <person name="Slezak T."/>
            <person name="Solovyev V."/>
            <person name="Thayer N."/>
            <person name="Tice H."/>
            <person name="Tsai M."/>
            <person name="Ustaszewska A."/>
            <person name="Vo N."/>
            <person name="Wagner M."/>
            <person name="Wheeler J."/>
            <person name="Wu K."/>
            <person name="Xie G."/>
            <person name="Yang J."/>
            <person name="Dubchak I."/>
            <person name="Furey T.S."/>
            <person name="DeJong P."/>
            <person name="Dickson M."/>
            <person name="Gordon D."/>
            <person name="Eichler E.E."/>
            <person name="Pennacchio L.A."/>
            <person name="Richardson P."/>
            <person name="Stubbs L."/>
            <person name="Rokhsar D.S."/>
            <person name="Myers R.M."/>
            <person name="Rubin E.M."/>
            <person name="Lucas S.M."/>
        </authorList>
    </citation>
    <scope>NUCLEOTIDE SEQUENCE [LARGE SCALE GENOMIC DNA]</scope>
</reference>
<reference key="3">
    <citation type="journal article" date="2004" name="Genome Res.">
        <title>The status, quality, and expansion of the NIH full-length cDNA project: the Mammalian Gene Collection (MGC).</title>
        <authorList>
            <consortium name="The MGC Project Team"/>
        </authorList>
    </citation>
    <scope>NUCLEOTIDE SEQUENCE [LARGE SCALE MRNA]</scope>
    <scope>VARIANT LEU-20</scope>
    <source>
        <tissue>Skin</tissue>
    </source>
</reference>
<reference key="4">
    <citation type="journal article" date="1994" name="J. Biol. Chem.">
        <title>Purification and characterization of a 20-kDa protein that is highly homologous to alpha B crystallin.</title>
        <authorList>
            <person name="Kato K."/>
            <person name="Goto S."/>
            <person name="Inaguma Y."/>
            <person name="Hasegawa K."/>
            <person name="Morishita R."/>
            <person name="Asano T."/>
        </authorList>
    </citation>
    <scope>PROTEIN SEQUENCE OF 2-160</scope>
    <scope>CHARACTERIZATION</scope>
    <source>
        <tissue>Muscle</tissue>
    </source>
</reference>
<reference key="5">
    <citation type="journal article" date="2009" name="Biochem. J.">
        <title>Identification of the key structural motifs involved in HspB8/HspB6-Bag3 interaction.</title>
        <authorList>
            <person name="Fuchs M."/>
            <person name="Poirier D.J."/>
            <person name="Seguin S.J."/>
            <person name="Lambert H."/>
            <person name="Carra S."/>
            <person name="Charette S.J."/>
            <person name="Landry J."/>
        </authorList>
    </citation>
    <scope>FUNCTION</scope>
    <scope>INTERACTION WITH BAG3</scope>
</reference>
<reference key="6">
    <citation type="journal article" date="2004" name="Eur. J. Biochem.">
        <title>Some properties of human small heat shock protein Hsp20 (HspB6).</title>
        <authorList>
            <person name="Bukach O.V."/>
            <person name="Seit-Nebi A.S."/>
            <person name="Marston S.B."/>
            <person name="Gusev N.B."/>
        </authorList>
    </citation>
    <scope>FUNCTION</scope>
</reference>
<reference key="7">
    <citation type="journal article" date="2009" name="Biochim. Biophys. Acta">
        <title>HSPB7 is a SC35 speckle resident small heat shock protein.</title>
        <authorList>
            <person name="Vos M.J."/>
            <person name="Kanon B."/>
            <person name="Kampinga H.H."/>
        </authorList>
    </citation>
    <scope>SUBCELLULAR LOCATION</scope>
</reference>
<reference key="8">
    <citation type="journal article" date="2010" name="Cell Stress Chaperones">
        <title>The small heat shock protein, HSPB6, in muscle function and disease.</title>
        <authorList>
            <person name="Dreiza C.M."/>
            <person name="Komalavilas P."/>
            <person name="Furnish E.J."/>
            <person name="Flynn C.R."/>
            <person name="Sheller M.R."/>
            <person name="Smoke C.C."/>
            <person name="Lopes L.B."/>
            <person name="Brophy C.M."/>
        </authorList>
    </citation>
    <scope>REVIEW ON FUNCTION IN MUSCLE</scope>
</reference>
<reference key="9">
    <citation type="journal article" date="2010" name="Cell Stress Chaperones">
        <title>Versatility of the small heat shock protein HSPB6 (Hsp20).</title>
        <authorList>
            <person name="Seit-Nebi A.S."/>
            <person name="Gusev N.B."/>
        </authorList>
    </citation>
    <scope>REVIEW ON FUNCTION IN MUSCLE</scope>
</reference>
<reference key="10">
    <citation type="journal article" date="2010" name="Hum. Mol. Genet.">
        <title>HSPB7 is the most potent polyQ aggregation suppressor within the HSPB family of molecular chaperones.</title>
        <authorList>
            <person name="Vos M.J."/>
            <person name="Zijlstra M.P."/>
            <person name="Kanon B."/>
            <person name="van Waarde-Verhagen M.A."/>
            <person name="Brunt E.R."/>
            <person name="Oosterveld-Hut H.M."/>
            <person name="Carra S."/>
            <person name="Sibon O.C."/>
            <person name="Kampinga H.H."/>
        </authorList>
    </citation>
    <scope>FUNCTION</scope>
</reference>
<reference key="11">
    <citation type="journal article" date="2011" name="J. Mol. Biol.">
        <title>Three-dimensional structure of alpha-crystallin domain dimers of human small heat shock proteins HSPB1 and HSPB6.</title>
        <authorList>
            <person name="Baranova E.V."/>
            <person name="Weeks S.D."/>
            <person name="Beelen S."/>
            <person name="Bukach O.V."/>
            <person name="Gusev N.B."/>
            <person name="Strelkov S.V."/>
        </authorList>
    </citation>
    <scope>INTERACTION WITH HSPB1</scope>
</reference>
<reference key="12">
    <citation type="journal article" date="2011" name="J. Mol. Cell. Cardiol.">
        <title>Disruption of the cyclic AMP phosphodiesterase-4 (PDE4)-HSP20 complex attenuates the beta-agonist induced hypertrophic response in cardiac myocytes.</title>
        <authorList>
            <person name="Sin Y.Y."/>
            <person name="Edwards H.V."/>
            <person name="Li X."/>
            <person name="Day J.P."/>
            <person name="Christian F."/>
            <person name="Dunlop A.J."/>
            <person name="Adams D.R."/>
            <person name="Zaccolo M."/>
            <person name="Houslay M.D."/>
            <person name="Baillie G.S."/>
        </authorList>
    </citation>
    <scope>PHOSPHORYLATION AT SER-16</scope>
    <scope>INTERACTION WITH PDE4A AND PDE4D</scope>
</reference>
<reference key="13">
    <citation type="journal article" date="2012" name="Biochemistry">
        <title>Monomeric 14-3-3zeta has a chaperone-like activity and is stabilized by phosphorylated HspB6.</title>
        <authorList>
            <person name="Sluchanko N.N."/>
            <person name="Artemova N.V."/>
            <person name="Sudnitsyna M.V."/>
            <person name="Safenkova I.V."/>
            <person name="Antson A.A."/>
            <person name="Levitsky D.I."/>
            <person name="Gusev N.B."/>
        </authorList>
    </citation>
    <scope>INTERACTION WITH YWHAZ</scope>
    <scope>FUNCTION</scope>
</reference>
<reference key="14">
    <citation type="journal article" date="2012" name="Cell Stress Chaperones">
        <title>Heterooligomeric complexes of human small heat shock proteins.</title>
        <authorList>
            <person name="Mymrikov E.V."/>
            <person name="Seit-Nebi A.S."/>
            <person name="Gusev N.B."/>
        </authorList>
    </citation>
    <scope>SUBUNIT</scope>
</reference>
<reference key="15">
    <citation type="journal article" date="2012" name="PLoS ONE">
        <title>Hsp20 functions as a novel cardiokine in promoting angiogenesis via activation of VEGFR2.</title>
        <authorList>
            <person name="Zhang X."/>
            <person name="Wang X."/>
            <person name="Zhu H."/>
            <person name="Kranias E.G."/>
            <person name="Tang Y."/>
            <person name="Peng T."/>
            <person name="Chang J."/>
            <person name="Fan G.C."/>
        </authorList>
    </citation>
    <scope>FUNCTION</scope>
    <scope>SUBCELLULAR LOCATION</scope>
    <scope>INTERACTION WITH KDR</scope>
</reference>
<reference key="16">
    <citation type="journal article" date="2013" name="Arch. Biochem. Biophys.">
        <title>Structure and properties of G84R and L99M mutants of human small heat shock protein HspB1 correlating with motor neuropathy.</title>
        <authorList>
            <person name="Nefedova V.V."/>
            <person name="Sudnitsyna M.V."/>
            <person name="Strelkov S.V."/>
            <person name="Gusev N.B."/>
        </authorList>
    </citation>
    <scope>INTERACTION WITH HSPB1</scope>
</reference>
<reference key="17">
    <citation type="journal article" date="2014" name="J. Proteomics">
        <title>An enzyme assisted RP-RPLC approach for in-depth analysis of human liver phosphoproteome.</title>
        <authorList>
            <person name="Bian Y."/>
            <person name="Song C."/>
            <person name="Cheng K."/>
            <person name="Dong M."/>
            <person name="Wang F."/>
            <person name="Huang J."/>
            <person name="Sun D."/>
            <person name="Wang L."/>
            <person name="Ye M."/>
            <person name="Zou H."/>
        </authorList>
    </citation>
    <scope>PHOSPHORYLATION [LARGE SCALE ANALYSIS] AT SER-16</scope>
    <scope>IDENTIFICATION BY MASS SPECTROMETRY [LARGE SCALE ANALYSIS]</scope>
    <source>
        <tissue>Liver</tissue>
    </source>
</reference>
<reference key="18">
    <citation type="journal article" date="2015" name="Biochemistry">
        <title>A mechanism of subunit recruitment in human small heat shock protein oligomers.</title>
        <authorList>
            <person name="Delbecq S.P."/>
            <person name="Rosenbaum J.C."/>
            <person name="Klevit R.E."/>
        </authorList>
    </citation>
    <scope>INTERACTION WITH CRYAB</scope>
    <scope>MUTAGENESIS OF SER-134</scope>
</reference>
<reference key="19">
    <citation type="journal article" date="2015" name="Cell Biochem. Funct.">
        <title>Heat shock protein 20 (HSP20) is a novel substrate for protein kinase D1 (PKD1).</title>
        <authorList>
            <person name="Sin Y.Y."/>
            <person name="Baillie G.S."/>
        </authorList>
    </citation>
    <scope>INTERACTION WITH PRKD1</scope>
</reference>
<reference key="20">
    <citation type="journal article" date="2016" name="Arch. Biochem. Biophys.">
        <title>The preferential heterodimerization of human small heat shock proteins HSPB1 and HSPB6 is dictated by the N-terminal domain.</title>
        <authorList>
            <person name="Heirbaut M."/>
            <person name="Lermyte F."/>
            <person name="Martin E.M."/>
            <person name="Beelen S."/>
            <person name="Verschueren T."/>
            <person name="Sobott F."/>
            <person name="Strelkov S.V."/>
            <person name="Weeks S.D."/>
        </authorList>
    </citation>
    <scope>SUBUNIT</scope>
</reference>
<reference key="21">
    <citation type="journal article" date="2014" name="J. Struct. Biol.">
        <title>Molecular structure and dynamics of the dimeric human small heat shock protein HSPB6.</title>
        <authorList>
            <person name="Weeks S.D."/>
            <person name="Baranova E.V."/>
            <person name="Heirbaut M."/>
            <person name="Beelen S."/>
            <person name="Shkumatov A.V."/>
            <person name="Gusev N.B."/>
            <person name="Strelkov S.V."/>
        </authorList>
    </citation>
    <scope>X-RAY CRYSTALLOGRAPHY (2.20 ANGSTROMS) OF 57-160</scope>
    <scope>SUBUNIT</scope>
    <scope>MUTAGENESIS OF ILE-3 AND VAL-5</scope>
</reference>
<reference key="22">
    <citation type="journal article" date="2008" name="J. Biol. Chem.">
        <title>Human mutation in the anti-apoptotic heat shock protein 20 abrogates its cardioprotective effects.</title>
        <authorList>
            <person name="Nicolaou P."/>
            <person name="Knoell R."/>
            <person name="Haghighi K."/>
            <person name="Fan G.C."/>
            <person name="Dorn G.W. II"/>
            <person name="Hasenfub G."/>
            <person name="Kranias E.G."/>
        </authorList>
    </citation>
    <scope>VARIANT LEU-20</scope>
    <scope>CHARACTERIZATION OF VARIANT LEU-20</scope>
</reference>
<organism>
    <name type="scientific">Homo sapiens</name>
    <name type="common">Human</name>
    <dbReference type="NCBI Taxonomy" id="9606"/>
    <lineage>
        <taxon>Eukaryota</taxon>
        <taxon>Metazoa</taxon>
        <taxon>Chordata</taxon>
        <taxon>Craniata</taxon>
        <taxon>Vertebrata</taxon>
        <taxon>Euteleostomi</taxon>
        <taxon>Mammalia</taxon>
        <taxon>Eutheria</taxon>
        <taxon>Euarchontoglires</taxon>
        <taxon>Primates</taxon>
        <taxon>Haplorrhini</taxon>
        <taxon>Catarrhini</taxon>
        <taxon>Hominidae</taxon>
        <taxon>Homo</taxon>
    </lineage>
</organism>
<evidence type="ECO:0000250" key="1">
    <source>
        <dbReference type="UniProtKB" id="P97541"/>
    </source>
</evidence>
<evidence type="ECO:0000250" key="2">
    <source>
        <dbReference type="UniProtKB" id="Q5EBG6"/>
    </source>
</evidence>
<evidence type="ECO:0000255" key="3">
    <source>
        <dbReference type="PROSITE-ProRule" id="PRU00285"/>
    </source>
</evidence>
<evidence type="ECO:0000269" key="4">
    <source>
    </source>
</evidence>
<evidence type="ECO:0000269" key="5">
    <source>
    </source>
</evidence>
<evidence type="ECO:0000269" key="6">
    <source>
    </source>
</evidence>
<evidence type="ECO:0000269" key="7">
    <source>
    </source>
</evidence>
<evidence type="ECO:0000269" key="8">
    <source>
    </source>
</evidence>
<evidence type="ECO:0000269" key="9">
    <source>
    </source>
</evidence>
<evidence type="ECO:0000269" key="10">
    <source>
    </source>
</evidence>
<evidence type="ECO:0000269" key="11">
    <source>
    </source>
</evidence>
<evidence type="ECO:0000269" key="12">
    <source>
    </source>
</evidence>
<evidence type="ECO:0000269" key="13">
    <source>
    </source>
</evidence>
<evidence type="ECO:0000269" key="14">
    <source>
    </source>
</evidence>
<evidence type="ECO:0000269" key="15">
    <source>
    </source>
</evidence>
<evidence type="ECO:0000269" key="16">
    <source>
    </source>
</evidence>
<evidence type="ECO:0000269" key="17">
    <source>
    </source>
</evidence>
<evidence type="ECO:0000269" key="18">
    <source>
    </source>
</evidence>
<evidence type="ECO:0000305" key="19"/>
<evidence type="ECO:0000305" key="20">
    <source>
    </source>
</evidence>
<evidence type="ECO:0000305" key="21">
    <source>
    </source>
</evidence>
<evidence type="ECO:0007744" key="22">
    <source>
    </source>
</evidence>
<evidence type="ECO:0007829" key="23">
    <source>
        <dbReference type="PDB" id="4JUS"/>
    </source>
</evidence>
<evidence type="ECO:0007829" key="24">
    <source>
        <dbReference type="PDB" id="4JUT"/>
    </source>
</evidence>
<evidence type="ECO:0007829" key="25">
    <source>
        <dbReference type="PDB" id="5LUM"/>
    </source>
</evidence>
<feature type="chain" id="PRO_0000125939" description="Heat shock protein beta-6">
    <location>
        <begin position="1"/>
        <end position="160"/>
    </location>
</feature>
<feature type="domain" description="sHSP" evidence="3">
    <location>
        <begin position="55"/>
        <end position="160"/>
    </location>
</feature>
<feature type="region of interest" description="Involved in stabilization of the HSPB1:HSBP6 heterodimer" evidence="17">
    <location>
        <begin position="1"/>
        <end position="72"/>
    </location>
</feature>
<feature type="modified residue" description="Phosphoserine; by PKA" evidence="9 22">
    <location>
        <position position="16"/>
    </location>
</feature>
<feature type="modified residue" description="Deamidated glutamine" evidence="1">
    <location>
        <position position="66"/>
    </location>
</feature>
<feature type="sequence variant" id="VAR_077818" description="Decreases phosphorylation at Ser-16; abolishes cardioprotective effects; dbSNP:rs11549029." evidence="5">
    <original>P</original>
    <variation>L</variation>
    <location>
        <position position="20"/>
    </location>
</feature>
<feature type="mutagenesis site" description="Increases homodimer-based self-association properties; increases chaperone activity; when associated with G-5." evidence="15">
    <original>I</original>
    <variation>G</variation>
    <location>
        <position position="3"/>
    </location>
</feature>
<feature type="mutagenesis site" description="Increases homodimer-based self-association properties; increases chaperone activity; when associated with G-3." evidence="15">
    <original>V</original>
    <variation>G</variation>
    <location>
        <position position="5"/>
    </location>
</feature>
<feature type="mutagenesis site" description="No effect on homodimer-based self-association properties; no effect on chaperone activity." evidence="15">
    <original>V</original>
    <variation>G</variation>
    <location>
        <position position="67"/>
    </location>
</feature>
<feature type="mutagenesis site" description="Decreases heteromer formation with CRYAB.">
    <original>S</original>
    <variation>Q</variation>
    <location>
        <position position="134"/>
    </location>
</feature>
<feature type="sequence conflict" description="In Ref. 2; AAB81196." evidence="19" ref="2">
    <location>
        <begin position="64"/>
        <end position="66"/>
    </location>
</feature>
<feature type="strand" evidence="25">
    <location>
        <begin position="3"/>
        <end position="5"/>
    </location>
</feature>
<feature type="strand" evidence="25">
    <location>
        <begin position="7"/>
        <end position="9"/>
    </location>
</feature>
<feature type="strand" evidence="23">
    <location>
        <begin position="69"/>
        <end position="71"/>
    </location>
</feature>
<feature type="strand" evidence="24">
    <location>
        <begin position="74"/>
        <end position="79"/>
    </location>
</feature>
<feature type="helix" evidence="24">
    <location>
        <begin position="85"/>
        <end position="87"/>
    </location>
</feature>
<feature type="strand" evidence="24">
    <location>
        <begin position="88"/>
        <end position="93"/>
    </location>
</feature>
<feature type="strand" evidence="24">
    <location>
        <begin position="96"/>
        <end position="107"/>
    </location>
</feature>
<feature type="strand" evidence="24">
    <location>
        <begin position="109"/>
        <end position="122"/>
    </location>
</feature>
<feature type="helix" evidence="24">
    <location>
        <begin position="129"/>
        <end position="131"/>
    </location>
</feature>
<feature type="strand" evidence="24">
    <location>
        <begin position="133"/>
        <end position="136"/>
    </location>
</feature>
<feature type="strand" evidence="24">
    <location>
        <begin position="140"/>
        <end position="146"/>
    </location>
</feature>
<name>HSPB6_HUMAN</name>
<proteinExistence type="evidence at protein level"/>